<name>CYB_CONCR</name>
<accession>Q85AG5</accession>
<accession>Q85DF6</accession>
<gene>
    <name type="primary">MT-CYB</name>
    <name type="synonym">COB</name>
    <name type="synonym">CYTB</name>
    <name type="synonym">MTCYB</name>
</gene>
<sequence length="379" mass="42687">MTNIRKTHPLMKIINDSFIDLPAPSNISSWWNFGSLLGVCLILQILTGLFLAMHYTSDTMTAFSSVTHICRDVNYGWLIRYMHANGASMFFICLFLHVGRGMYYGSYMFMETWNIGVILLFATMATAFMGYVLPWGQMSFWGATVITNLLSAIPYIGTDLVEWIWGGFSVDKATLTRFFAFHFILPFIIAALAGVHLLFLHETGSNNPSGLSSDSDKIPFHPYYTIKDILGVLILIMILTSLVLFSPDLLGDPDNYIPANPLNTPPHIKPEWYFLFAYAILRSIPNKLGGVLALVMSILILAFLPLLHTAKQRSMMFRPISQCLFWILVADLLTLTWIGGQPVEHPFIIIGQLASILYFTIILVLMPLASIVENNLLKW</sequence>
<feature type="chain" id="PRO_0000060803" description="Cytochrome b">
    <location>
        <begin position="1"/>
        <end position="379"/>
    </location>
</feature>
<feature type="transmembrane region" description="Helical" evidence="2">
    <location>
        <begin position="33"/>
        <end position="53"/>
    </location>
</feature>
<feature type="transmembrane region" description="Helical" evidence="2">
    <location>
        <begin position="77"/>
        <end position="98"/>
    </location>
</feature>
<feature type="transmembrane region" description="Helical" evidence="2">
    <location>
        <begin position="113"/>
        <end position="133"/>
    </location>
</feature>
<feature type="transmembrane region" description="Helical" evidence="2">
    <location>
        <begin position="178"/>
        <end position="198"/>
    </location>
</feature>
<feature type="transmembrane region" description="Helical" evidence="2">
    <location>
        <begin position="226"/>
        <end position="246"/>
    </location>
</feature>
<feature type="transmembrane region" description="Helical" evidence="2">
    <location>
        <begin position="288"/>
        <end position="308"/>
    </location>
</feature>
<feature type="transmembrane region" description="Helical" evidence="2">
    <location>
        <begin position="320"/>
        <end position="340"/>
    </location>
</feature>
<feature type="transmembrane region" description="Helical" evidence="2">
    <location>
        <begin position="347"/>
        <end position="367"/>
    </location>
</feature>
<feature type="binding site" description="axial binding residue" evidence="2">
    <location>
        <position position="83"/>
    </location>
    <ligand>
        <name>heme b</name>
        <dbReference type="ChEBI" id="CHEBI:60344"/>
        <label>b562</label>
    </ligand>
    <ligandPart>
        <name>Fe</name>
        <dbReference type="ChEBI" id="CHEBI:18248"/>
    </ligandPart>
</feature>
<feature type="binding site" description="axial binding residue" evidence="2">
    <location>
        <position position="97"/>
    </location>
    <ligand>
        <name>heme b</name>
        <dbReference type="ChEBI" id="CHEBI:60344"/>
        <label>b566</label>
    </ligand>
    <ligandPart>
        <name>Fe</name>
        <dbReference type="ChEBI" id="CHEBI:18248"/>
    </ligandPart>
</feature>
<feature type="binding site" description="axial binding residue" evidence="2">
    <location>
        <position position="182"/>
    </location>
    <ligand>
        <name>heme b</name>
        <dbReference type="ChEBI" id="CHEBI:60344"/>
        <label>b562</label>
    </ligand>
    <ligandPart>
        <name>Fe</name>
        <dbReference type="ChEBI" id="CHEBI:18248"/>
    </ligandPart>
</feature>
<feature type="binding site" description="axial binding residue" evidence="2">
    <location>
        <position position="196"/>
    </location>
    <ligand>
        <name>heme b</name>
        <dbReference type="ChEBI" id="CHEBI:60344"/>
        <label>b566</label>
    </ligand>
    <ligandPart>
        <name>Fe</name>
        <dbReference type="ChEBI" id="CHEBI:18248"/>
    </ligandPart>
</feature>
<feature type="binding site" evidence="2">
    <location>
        <position position="201"/>
    </location>
    <ligand>
        <name>a ubiquinone</name>
        <dbReference type="ChEBI" id="CHEBI:16389"/>
    </ligand>
</feature>
<feature type="sequence variant" description="In strain: Isolate SNP-2.">
    <original>I</original>
    <variation>V</variation>
    <location>
        <position position="14"/>
    </location>
</feature>
<feature type="sequence variant" description="In strain: Isolate SNP-2.">
    <original>M</original>
    <variation>T</variation>
    <location>
        <position position="60"/>
    </location>
</feature>
<feature type="sequence variant" description="In strain: Isolate SNP-2.">
    <original>T</original>
    <variation>A</variation>
    <location>
        <position position="67"/>
    </location>
</feature>
<feature type="sequence variant" description="In strain: Isolate SNP-2.">
    <original>M</original>
    <variation>L</variation>
    <location>
        <position position="102"/>
    </location>
</feature>
<feature type="sequence variant" description="In strain: Isolate SNP-2.">
    <original>MI</original>
    <variation>LV</variation>
    <location>
        <begin position="237"/>
        <end position="238"/>
    </location>
</feature>
<evidence type="ECO:0000250" key="1"/>
<evidence type="ECO:0000250" key="2">
    <source>
        <dbReference type="UniProtKB" id="P00157"/>
    </source>
</evidence>
<evidence type="ECO:0000255" key="3">
    <source>
        <dbReference type="PROSITE-ProRule" id="PRU00967"/>
    </source>
</evidence>
<evidence type="ECO:0000255" key="4">
    <source>
        <dbReference type="PROSITE-ProRule" id="PRU00968"/>
    </source>
</evidence>
<protein>
    <recommendedName>
        <fullName>Cytochrome b</fullName>
    </recommendedName>
    <alternativeName>
        <fullName>Complex III subunit 3</fullName>
    </alternativeName>
    <alternativeName>
        <fullName>Complex III subunit III</fullName>
    </alternativeName>
    <alternativeName>
        <fullName>Cytochrome b-c1 complex subunit 3</fullName>
    </alternativeName>
    <alternativeName>
        <fullName>Ubiquinol-cytochrome-c reductase complex cytochrome b subunit</fullName>
    </alternativeName>
</protein>
<dbReference type="EMBL" id="AB076810">
    <property type="protein sequence ID" value="BAC75895.1"/>
    <property type="molecule type" value="Genomic_DNA"/>
</dbReference>
<dbReference type="EMBL" id="AB076811">
    <property type="protein sequence ID" value="BAC75896.1"/>
    <property type="molecule type" value="Genomic_DNA"/>
</dbReference>
<dbReference type="EMBL" id="AB076812">
    <property type="protein sequence ID" value="BAC75897.1"/>
    <property type="molecule type" value="Genomic_DNA"/>
</dbReference>
<dbReference type="SMR" id="Q85AG5"/>
<dbReference type="GO" id="GO:0005743">
    <property type="term" value="C:mitochondrial inner membrane"/>
    <property type="evidence" value="ECO:0007669"/>
    <property type="project" value="UniProtKB-SubCell"/>
</dbReference>
<dbReference type="GO" id="GO:0045275">
    <property type="term" value="C:respiratory chain complex III"/>
    <property type="evidence" value="ECO:0007669"/>
    <property type="project" value="InterPro"/>
</dbReference>
<dbReference type="GO" id="GO:0046872">
    <property type="term" value="F:metal ion binding"/>
    <property type="evidence" value="ECO:0007669"/>
    <property type="project" value="UniProtKB-KW"/>
</dbReference>
<dbReference type="GO" id="GO:0008121">
    <property type="term" value="F:ubiquinol-cytochrome-c reductase activity"/>
    <property type="evidence" value="ECO:0007669"/>
    <property type="project" value="InterPro"/>
</dbReference>
<dbReference type="GO" id="GO:0006122">
    <property type="term" value="P:mitochondrial electron transport, ubiquinol to cytochrome c"/>
    <property type="evidence" value="ECO:0007669"/>
    <property type="project" value="TreeGrafter"/>
</dbReference>
<dbReference type="CDD" id="cd00290">
    <property type="entry name" value="cytochrome_b_C"/>
    <property type="match status" value="1"/>
</dbReference>
<dbReference type="CDD" id="cd00284">
    <property type="entry name" value="Cytochrome_b_N"/>
    <property type="match status" value="1"/>
</dbReference>
<dbReference type="FunFam" id="1.20.810.10:FF:000002">
    <property type="entry name" value="Cytochrome b"/>
    <property type="match status" value="1"/>
</dbReference>
<dbReference type="Gene3D" id="1.20.810.10">
    <property type="entry name" value="Cytochrome Bc1 Complex, Chain C"/>
    <property type="match status" value="1"/>
</dbReference>
<dbReference type="InterPro" id="IPR005798">
    <property type="entry name" value="Cyt_b/b6_C"/>
</dbReference>
<dbReference type="InterPro" id="IPR036150">
    <property type="entry name" value="Cyt_b/b6_C_sf"/>
</dbReference>
<dbReference type="InterPro" id="IPR005797">
    <property type="entry name" value="Cyt_b/b6_N"/>
</dbReference>
<dbReference type="InterPro" id="IPR027387">
    <property type="entry name" value="Cytb/b6-like_sf"/>
</dbReference>
<dbReference type="InterPro" id="IPR030689">
    <property type="entry name" value="Cytochrome_b"/>
</dbReference>
<dbReference type="InterPro" id="IPR048260">
    <property type="entry name" value="Cytochrome_b_C_euk/bac"/>
</dbReference>
<dbReference type="InterPro" id="IPR048259">
    <property type="entry name" value="Cytochrome_b_N_euk/bac"/>
</dbReference>
<dbReference type="InterPro" id="IPR016174">
    <property type="entry name" value="Di-haem_cyt_TM"/>
</dbReference>
<dbReference type="PANTHER" id="PTHR19271">
    <property type="entry name" value="CYTOCHROME B"/>
    <property type="match status" value="1"/>
</dbReference>
<dbReference type="PANTHER" id="PTHR19271:SF16">
    <property type="entry name" value="CYTOCHROME B"/>
    <property type="match status" value="1"/>
</dbReference>
<dbReference type="Pfam" id="PF00032">
    <property type="entry name" value="Cytochrom_B_C"/>
    <property type="match status" value="1"/>
</dbReference>
<dbReference type="Pfam" id="PF00033">
    <property type="entry name" value="Cytochrome_B"/>
    <property type="match status" value="1"/>
</dbReference>
<dbReference type="PIRSF" id="PIRSF038885">
    <property type="entry name" value="COB"/>
    <property type="match status" value="1"/>
</dbReference>
<dbReference type="SUPFAM" id="SSF81648">
    <property type="entry name" value="a domain/subunit of cytochrome bc1 complex (Ubiquinol-cytochrome c reductase)"/>
    <property type="match status" value="1"/>
</dbReference>
<dbReference type="SUPFAM" id="SSF81342">
    <property type="entry name" value="Transmembrane di-heme cytochromes"/>
    <property type="match status" value="1"/>
</dbReference>
<dbReference type="PROSITE" id="PS51003">
    <property type="entry name" value="CYTB_CTER"/>
    <property type="match status" value="1"/>
</dbReference>
<dbReference type="PROSITE" id="PS51002">
    <property type="entry name" value="CYTB_NTER"/>
    <property type="match status" value="1"/>
</dbReference>
<geneLocation type="mitochondrion"/>
<reference key="1">
    <citation type="journal article" date="2003" name="Mol. Phylogenet. Evol.">
        <title>Molecular phylogenetic relationships of moles, shrew moles, and desmans from the new and old worlds.</title>
        <authorList>
            <person name="Shinohara A."/>
            <person name="Campbell K.L."/>
            <person name="Suzuki H."/>
        </authorList>
    </citation>
    <scope>NUCLEOTIDE SEQUENCE [GENOMIC DNA]</scope>
    <source>
        <strain>Isolate SN-1</strain>
        <strain>Isolate SN-2</strain>
        <strain>Isolate SNP-2</strain>
    </source>
</reference>
<proteinExistence type="inferred from homology"/>
<organism>
    <name type="scientific">Condylura cristata</name>
    <name type="common">Star-nosed mole</name>
    <name type="synonym">Sorex cristatus</name>
    <dbReference type="NCBI Taxonomy" id="143302"/>
    <lineage>
        <taxon>Eukaryota</taxon>
        <taxon>Metazoa</taxon>
        <taxon>Chordata</taxon>
        <taxon>Craniata</taxon>
        <taxon>Vertebrata</taxon>
        <taxon>Euteleostomi</taxon>
        <taxon>Mammalia</taxon>
        <taxon>Eutheria</taxon>
        <taxon>Laurasiatheria</taxon>
        <taxon>Eulipotyphla</taxon>
        <taxon>Talpidae</taxon>
        <taxon>Condylura</taxon>
    </lineage>
</organism>
<keyword id="KW-0249">Electron transport</keyword>
<keyword id="KW-0349">Heme</keyword>
<keyword id="KW-0408">Iron</keyword>
<keyword id="KW-0472">Membrane</keyword>
<keyword id="KW-0479">Metal-binding</keyword>
<keyword id="KW-0496">Mitochondrion</keyword>
<keyword id="KW-0999">Mitochondrion inner membrane</keyword>
<keyword id="KW-0679">Respiratory chain</keyword>
<keyword id="KW-0812">Transmembrane</keyword>
<keyword id="KW-1133">Transmembrane helix</keyword>
<keyword id="KW-0813">Transport</keyword>
<keyword id="KW-0830">Ubiquinone</keyword>
<comment type="function">
    <text evidence="2">Component of the ubiquinol-cytochrome c reductase complex (complex III or cytochrome b-c1 complex) that is part of the mitochondrial respiratory chain. The b-c1 complex mediates electron transfer from ubiquinol to cytochrome c. Contributes to the generation of a proton gradient across the mitochondrial membrane that is then used for ATP synthesis.</text>
</comment>
<comment type="cofactor">
    <cofactor evidence="2">
        <name>heme b</name>
        <dbReference type="ChEBI" id="CHEBI:60344"/>
    </cofactor>
    <text evidence="2">Binds 2 heme b groups non-covalently.</text>
</comment>
<comment type="subunit">
    <text evidence="2">The cytochrome bc1 complex contains 11 subunits: 3 respiratory subunits (MT-CYB, CYC1 and UQCRFS1), 2 core proteins (UQCRC1 and UQCRC2) and 6 low-molecular weight proteins (UQCRH/QCR6, UQCRB/QCR7, UQCRQ/QCR8, UQCR10/QCR9, UQCR11/QCR10 and a cleavage product of UQCRFS1). This cytochrome bc1 complex then forms a dimer.</text>
</comment>
<comment type="subcellular location">
    <subcellularLocation>
        <location evidence="2">Mitochondrion inner membrane</location>
        <topology evidence="2">Multi-pass membrane protein</topology>
    </subcellularLocation>
</comment>
<comment type="miscellaneous">
    <text evidence="1">Heme 1 (or BL or b562) is low-potential and absorbs at about 562 nm, and heme 2 (or BH or b566) is high-potential and absorbs at about 566 nm.</text>
</comment>
<comment type="similarity">
    <text evidence="3 4">Belongs to the cytochrome b family.</text>
</comment>
<comment type="caution">
    <text evidence="2">The full-length protein contains only eight transmembrane helices, not nine as predicted by bioinformatics tools.</text>
</comment>